<keyword id="KW-0489">Methyltransferase</keyword>
<keyword id="KW-0949">S-adenosyl-L-methionine</keyword>
<keyword id="KW-0808">Transferase</keyword>
<keyword id="KW-0819">tRNA processing</keyword>
<proteinExistence type="inferred from homology"/>
<feature type="chain" id="PRO_0000229174" description="tRNA (guanine-N(7)-)-methyltransferase">
    <location>
        <begin position="1"/>
        <end position="201"/>
    </location>
</feature>
<feature type="active site" evidence="1">
    <location>
        <position position="106"/>
    </location>
</feature>
<feature type="binding site" evidence="2">
    <location>
        <position position="33"/>
    </location>
    <ligand>
        <name>S-adenosyl-L-methionine</name>
        <dbReference type="ChEBI" id="CHEBI:59789"/>
    </ligand>
</feature>
<feature type="binding site" evidence="2">
    <location>
        <position position="58"/>
    </location>
    <ligand>
        <name>S-adenosyl-L-methionine</name>
        <dbReference type="ChEBI" id="CHEBI:59789"/>
    </ligand>
</feature>
<feature type="binding site" evidence="2">
    <location>
        <position position="85"/>
    </location>
    <ligand>
        <name>S-adenosyl-L-methionine</name>
        <dbReference type="ChEBI" id="CHEBI:59789"/>
    </ligand>
</feature>
<feature type="binding site" evidence="2">
    <location>
        <position position="106"/>
    </location>
    <ligand>
        <name>S-adenosyl-L-methionine</name>
        <dbReference type="ChEBI" id="CHEBI:59789"/>
    </ligand>
</feature>
<feature type="binding site" evidence="2">
    <location>
        <position position="110"/>
    </location>
    <ligand>
        <name>substrate</name>
    </ligand>
</feature>
<feature type="binding site" evidence="2">
    <location>
        <position position="142"/>
    </location>
    <ligand>
        <name>substrate</name>
    </ligand>
</feature>
<feature type="binding site" evidence="2">
    <location>
        <begin position="180"/>
        <end position="183"/>
    </location>
    <ligand>
        <name>substrate</name>
    </ligand>
</feature>
<name>TRMB_MESH7</name>
<evidence type="ECO:0000250" key="1"/>
<evidence type="ECO:0000255" key="2">
    <source>
        <dbReference type="HAMAP-Rule" id="MF_01057"/>
    </source>
</evidence>
<dbReference type="EC" id="2.1.1.33" evidence="2"/>
<dbReference type="EMBL" id="AE017244">
    <property type="protein sequence ID" value="AAZ53832.1"/>
    <property type="molecule type" value="Genomic_DNA"/>
</dbReference>
<dbReference type="RefSeq" id="WP_011290278.1">
    <property type="nucleotide sequence ID" value="NC_007332.1"/>
</dbReference>
<dbReference type="SMR" id="Q4A7Q7"/>
<dbReference type="KEGG" id="mhp:MHP7448_0465"/>
<dbReference type="HOGENOM" id="CLU_050910_2_1_14"/>
<dbReference type="UniPathway" id="UPA00989"/>
<dbReference type="Proteomes" id="UP000000553">
    <property type="component" value="Chromosome"/>
</dbReference>
<dbReference type="GO" id="GO:0043527">
    <property type="term" value="C:tRNA methyltransferase complex"/>
    <property type="evidence" value="ECO:0007669"/>
    <property type="project" value="TreeGrafter"/>
</dbReference>
<dbReference type="GO" id="GO:0008176">
    <property type="term" value="F:tRNA (guanine(46)-N7)-methyltransferase activity"/>
    <property type="evidence" value="ECO:0007669"/>
    <property type="project" value="UniProtKB-UniRule"/>
</dbReference>
<dbReference type="CDD" id="cd02440">
    <property type="entry name" value="AdoMet_MTases"/>
    <property type="match status" value="1"/>
</dbReference>
<dbReference type="Gene3D" id="3.40.50.150">
    <property type="entry name" value="Vaccinia Virus protein VP39"/>
    <property type="match status" value="1"/>
</dbReference>
<dbReference type="HAMAP" id="MF_01057">
    <property type="entry name" value="tRNA_methyltr_TrmB"/>
    <property type="match status" value="1"/>
</dbReference>
<dbReference type="InterPro" id="IPR029063">
    <property type="entry name" value="SAM-dependent_MTases_sf"/>
</dbReference>
<dbReference type="InterPro" id="IPR003358">
    <property type="entry name" value="tRNA_(Gua-N-7)_MeTrfase_Trmb"/>
</dbReference>
<dbReference type="InterPro" id="IPR055361">
    <property type="entry name" value="tRNA_methyltr_TrmB_bact"/>
</dbReference>
<dbReference type="NCBIfam" id="NF001080">
    <property type="entry name" value="PRK00121.2-2"/>
    <property type="match status" value="1"/>
</dbReference>
<dbReference type="NCBIfam" id="TIGR00091">
    <property type="entry name" value="tRNA (guanosine(46)-N7)-methyltransferase TrmB"/>
    <property type="match status" value="1"/>
</dbReference>
<dbReference type="PANTHER" id="PTHR23417">
    <property type="entry name" value="3-DEOXY-D-MANNO-OCTULOSONIC-ACID TRANSFERASE/TRNA GUANINE-N 7 - -METHYLTRANSFERASE"/>
    <property type="match status" value="1"/>
</dbReference>
<dbReference type="PANTHER" id="PTHR23417:SF14">
    <property type="entry name" value="PENTACOTRIPEPTIDE-REPEAT REGION OF PRORP DOMAIN-CONTAINING PROTEIN"/>
    <property type="match status" value="1"/>
</dbReference>
<dbReference type="Pfam" id="PF02390">
    <property type="entry name" value="Methyltransf_4"/>
    <property type="match status" value="1"/>
</dbReference>
<dbReference type="SUPFAM" id="SSF53335">
    <property type="entry name" value="S-adenosyl-L-methionine-dependent methyltransferases"/>
    <property type="match status" value="1"/>
</dbReference>
<dbReference type="PROSITE" id="PS51625">
    <property type="entry name" value="SAM_MT_TRMB"/>
    <property type="match status" value="1"/>
</dbReference>
<gene>
    <name evidence="2" type="primary">trmB</name>
    <name type="ordered locus">MHP7448_0465</name>
</gene>
<protein>
    <recommendedName>
        <fullName evidence="2">tRNA (guanine-N(7)-)-methyltransferase</fullName>
        <ecNumber evidence="2">2.1.1.33</ecNumber>
    </recommendedName>
    <alternativeName>
        <fullName evidence="2">tRNA (guanine(46)-N(7))-methyltransferase</fullName>
    </alternativeName>
    <alternativeName>
        <fullName evidence="2">tRNA(m7G46)-methyltransferase</fullName>
    </alternativeName>
</protein>
<organism>
    <name type="scientific">Mesomycoplasma hyopneumoniae (strain 7448)</name>
    <name type="common">Mycoplasma hyopneumoniae</name>
    <dbReference type="NCBI Taxonomy" id="262722"/>
    <lineage>
        <taxon>Bacteria</taxon>
        <taxon>Bacillati</taxon>
        <taxon>Mycoplasmatota</taxon>
        <taxon>Mycoplasmoidales</taxon>
        <taxon>Metamycoplasmataceae</taxon>
        <taxon>Mesomycoplasma</taxon>
    </lineage>
</organism>
<reference key="1">
    <citation type="journal article" date="2005" name="J. Bacteriol.">
        <title>Swine and poultry pathogens: the complete genome sequences of two strains of Mycoplasma hyopneumoniae and a strain of Mycoplasma synoviae.</title>
        <authorList>
            <person name="Vasconcelos A.T.R."/>
            <person name="Ferreira H.B."/>
            <person name="Bizarro C.V."/>
            <person name="Bonatto S.L."/>
            <person name="Carvalho M.O."/>
            <person name="Pinto P.M."/>
            <person name="Almeida D.F."/>
            <person name="Almeida L.G.P."/>
            <person name="Almeida R."/>
            <person name="Alves-Junior L."/>
            <person name="Assuncao E.N."/>
            <person name="Azevedo V.A.C."/>
            <person name="Bogo M.R."/>
            <person name="Brigido M.M."/>
            <person name="Brocchi M."/>
            <person name="Burity H.A."/>
            <person name="Camargo A.A."/>
            <person name="Camargo S.S."/>
            <person name="Carepo M.S."/>
            <person name="Carraro D.M."/>
            <person name="de Mattos Cascardo J.C."/>
            <person name="Castro L.A."/>
            <person name="Cavalcanti G."/>
            <person name="Chemale G."/>
            <person name="Collevatti R.G."/>
            <person name="Cunha C.W."/>
            <person name="Dallagiovanna B."/>
            <person name="Dambros B.P."/>
            <person name="Dellagostin O.A."/>
            <person name="Falcao C."/>
            <person name="Fantinatti-Garboggini F."/>
            <person name="Felipe M.S.S."/>
            <person name="Fiorentin L."/>
            <person name="Franco G.R."/>
            <person name="Freitas N.S.A."/>
            <person name="Frias D."/>
            <person name="Grangeiro T.B."/>
            <person name="Grisard E.C."/>
            <person name="Guimaraes C.T."/>
            <person name="Hungria M."/>
            <person name="Jardim S.N."/>
            <person name="Krieger M.A."/>
            <person name="Laurino J.P."/>
            <person name="Lima L.F.A."/>
            <person name="Lopes M.I."/>
            <person name="Loreto E.L.S."/>
            <person name="Madeira H.M.F."/>
            <person name="Manfio G.P."/>
            <person name="Maranhao A.Q."/>
            <person name="Martinkovics C.T."/>
            <person name="Medeiros S.R.B."/>
            <person name="Moreira M.A.M."/>
            <person name="Neiva M."/>
            <person name="Ramalho-Neto C.E."/>
            <person name="Nicolas M.F."/>
            <person name="Oliveira S.C."/>
            <person name="Paixao R.F.C."/>
            <person name="Pedrosa F.O."/>
            <person name="Pena S.D.J."/>
            <person name="Pereira M."/>
            <person name="Pereira-Ferrari L."/>
            <person name="Piffer I."/>
            <person name="Pinto L.S."/>
            <person name="Potrich D.P."/>
            <person name="Salim A.C.M."/>
            <person name="Santos F.R."/>
            <person name="Schmitt R."/>
            <person name="Schneider M.P.C."/>
            <person name="Schrank A."/>
            <person name="Schrank I.S."/>
            <person name="Schuck A.F."/>
            <person name="Seuanez H.N."/>
            <person name="Silva D.W."/>
            <person name="Silva R."/>
            <person name="Silva S.C."/>
            <person name="Soares C.M.A."/>
            <person name="Souza K.R.L."/>
            <person name="Souza R.C."/>
            <person name="Staats C.C."/>
            <person name="Steffens M.B.R."/>
            <person name="Teixeira S.M.R."/>
            <person name="Urmenyi T.P."/>
            <person name="Vainstein M.H."/>
            <person name="Zuccherato L.W."/>
            <person name="Simpson A.J.G."/>
            <person name="Zaha A."/>
        </authorList>
    </citation>
    <scope>NUCLEOTIDE SEQUENCE [LARGE SCALE GENOMIC DNA]</scope>
    <source>
        <strain>7448</strain>
    </source>
</reference>
<comment type="function">
    <text evidence="2">Catalyzes the formation of N(7)-methylguanine at position 46 (m7G46) in tRNA.</text>
</comment>
<comment type="catalytic activity">
    <reaction evidence="2">
        <text>guanosine(46) in tRNA + S-adenosyl-L-methionine = N(7)-methylguanosine(46) in tRNA + S-adenosyl-L-homocysteine</text>
        <dbReference type="Rhea" id="RHEA:42708"/>
        <dbReference type="Rhea" id="RHEA-COMP:10188"/>
        <dbReference type="Rhea" id="RHEA-COMP:10189"/>
        <dbReference type="ChEBI" id="CHEBI:57856"/>
        <dbReference type="ChEBI" id="CHEBI:59789"/>
        <dbReference type="ChEBI" id="CHEBI:74269"/>
        <dbReference type="ChEBI" id="CHEBI:74480"/>
        <dbReference type="EC" id="2.1.1.33"/>
    </reaction>
</comment>
<comment type="pathway">
    <text evidence="2">tRNA modification; N(7)-methylguanine-tRNA biosynthesis.</text>
</comment>
<comment type="similarity">
    <text evidence="2">Belongs to the class I-like SAM-binding methyltransferase superfamily. TrmB family.</text>
</comment>
<accession>Q4A7Q7</accession>
<sequence length="201" mass="23727">MRLRNIPDALERIQNQNLLVKTPWNIDDSWIIEIGMGKGKMISQLAFDNPNKNFLGVEKYPSAAVKSIKYVKKYNLSNFFILISDAKDLLDQIKGKANTIWLTFPDPWPKNRHYKRRLTYKDFLKIYANLLVKDGILKLKTDNLKFFEFSIESLKENGWKITYQTNDLHNSLVNSSNIKTTYEEKWVNLNYKIHYLEAIFI</sequence>